<organism>
    <name type="scientific">Ehrlichia ruminantium (strain Welgevonden)</name>
    <dbReference type="NCBI Taxonomy" id="254945"/>
    <lineage>
        <taxon>Bacteria</taxon>
        <taxon>Pseudomonadati</taxon>
        <taxon>Pseudomonadota</taxon>
        <taxon>Alphaproteobacteria</taxon>
        <taxon>Rickettsiales</taxon>
        <taxon>Anaplasmataceae</taxon>
        <taxon>Ehrlichia</taxon>
    </lineage>
</organism>
<dbReference type="EC" id="3.4.25.2" evidence="1"/>
<dbReference type="EMBL" id="CR767821">
    <property type="protein sequence ID" value="CAH58502.1"/>
    <property type="molecule type" value="Genomic_DNA"/>
</dbReference>
<dbReference type="EMBL" id="CR925678">
    <property type="protein sequence ID" value="CAI27305.1"/>
    <property type="molecule type" value="Genomic_DNA"/>
</dbReference>
<dbReference type="RefSeq" id="WP_011155447.1">
    <property type="nucleotide sequence ID" value="NC_005295.2"/>
</dbReference>
<dbReference type="SMR" id="Q5HAB3"/>
<dbReference type="MEROPS" id="T01.006"/>
<dbReference type="GeneID" id="33057467"/>
<dbReference type="KEGG" id="eru:Erum7680"/>
<dbReference type="KEGG" id="erw:ERWE_CDS_08110"/>
<dbReference type="eggNOG" id="COG5405">
    <property type="taxonomic scope" value="Bacteria"/>
</dbReference>
<dbReference type="HOGENOM" id="CLU_093872_1_0_5"/>
<dbReference type="Proteomes" id="UP000001021">
    <property type="component" value="Chromosome"/>
</dbReference>
<dbReference type="GO" id="GO:0009376">
    <property type="term" value="C:HslUV protease complex"/>
    <property type="evidence" value="ECO:0007669"/>
    <property type="project" value="UniProtKB-UniRule"/>
</dbReference>
<dbReference type="GO" id="GO:0005839">
    <property type="term" value="C:proteasome core complex"/>
    <property type="evidence" value="ECO:0007669"/>
    <property type="project" value="InterPro"/>
</dbReference>
<dbReference type="GO" id="GO:0046872">
    <property type="term" value="F:metal ion binding"/>
    <property type="evidence" value="ECO:0007669"/>
    <property type="project" value="UniProtKB-KW"/>
</dbReference>
<dbReference type="GO" id="GO:0004298">
    <property type="term" value="F:threonine-type endopeptidase activity"/>
    <property type="evidence" value="ECO:0007669"/>
    <property type="project" value="UniProtKB-KW"/>
</dbReference>
<dbReference type="GO" id="GO:0051603">
    <property type="term" value="P:proteolysis involved in protein catabolic process"/>
    <property type="evidence" value="ECO:0007669"/>
    <property type="project" value="InterPro"/>
</dbReference>
<dbReference type="CDD" id="cd01913">
    <property type="entry name" value="protease_HslV"/>
    <property type="match status" value="1"/>
</dbReference>
<dbReference type="Gene3D" id="3.60.20.10">
    <property type="entry name" value="Glutamine Phosphoribosylpyrophosphate, subunit 1, domain 1"/>
    <property type="match status" value="1"/>
</dbReference>
<dbReference type="HAMAP" id="MF_00248">
    <property type="entry name" value="HslV"/>
    <property type="match status" value="1"/>
</dbReference>
<dbReference type="InterPro" id="IPR022281">
    <property type="entry name" value="ATP-dep_Prtase_HsIV_su"/>
</dbReference>
<dbReference type="InterPro" id="IPR029055">
    <property type="entry name" value="Ntn_hydrolases_N"/>
</dbReference>
<dbReference type="InterPro" id="IPR001353">
    <property type="entry name" value="Proteasome_sua/b"/>
</dbReference>
<dbReference type="InterPro" id="IPR023333">
    <property type="entry name" value="Proteasome_suB-type"/>
</dbReference>
<dbReference type="NCBIfam" id="TIGR03692">
    <property type="entry name" value="ATP_dep_HslV"/>
    <property type="match status" value="1"/>
</dbReference>
<dbReference type="NCBIfam" id="NF003964">
    <property type="entry name" value="PRK05456.1"/>
    <property type="match status" value="1"/>
</dbReference>
<dbReference type="PANTHER" id="PTHR32194:SF7">
    <property type="entry name" value="ATP-DEPENDENT PROTEASE SUBUNIT HSLV"/>
    <property type="match status" value="1"/>
</dbReference>
<dbReference type="PANTHER" id="PTHR32194">
    <property type="entry name" value="METALLOPROTEASE TLDD"/>
    <property type="match status" value="1"/>
</dbReference>
<dbReference type="Pfam" id="PF00227">
    <property type="entry name" value="Proteasome"/>
    <property type="match status" value="1"/>
</dbReference>
<dbReference type="PIRSF" id="PIRSF039093">
    <property type="entry name" value="HslV"/>
    <property type="match status" value="1"/>
</dbReference>
<dbReference type="SUPFAM" id="SSF56235">
    <property type="entry name" value="N-terminal nucleophile aminohydrolases (Ntn hydrolases)"/>
    <property type="match status" value="1"/>
</dbReference>
<dbReference type="PROSITE" id="PS51476">
    <property type="entry name" value="PROTEASOME_BETA_2"/>
    <property type="match status" value="1"/>
</dbReference>
<proteinExistence type="inferred from homology"/>
<keyword id="KW-0021">Allosteric enzyme</keyword>
<keyword id="KW-0963">Cytoplasm</keyword>
<keyword id="KW-0378">Hydrolase</keyword>
<keyword id="KW-0479">Metal-binding</keyword>
<keyword id="KW-0645">Protease</keyword>
<keyword id="KW-0915">Sodium</keyword>
<keyword id="KW-0888">Threonine protease</keyword>
<comment type="function">
    <text evidence="1">Protease subunit of a proteasome-like degradation complex believed to be a general protein degrading machinery.</text>
</comment>
<comment type="catalytic activity">
    <reaction evidence="1">
        <text>ATP-dependent cleavage of peptide bonds with broad specificity.</text>
        <dbReference type="EC" id="3.4.25.2"/>
    </reaction>
</comment>
<comment type="activity regulation">
    <text evidence="1">Allosterically activated by HslU binding.</text>
</comment>
<comment type="subunit">
    <text evidence="1">A double ring-shaped homohexamer of HslV is capped on each side by a ring-shaped HslU homohexamer. The assembly of the HslU/HslV complex is dependent on binding of ATP.</text>
</comment>
<comment type="subcellular location">
    <subcellularLocation>
        <location evidence="1">Cytoplasm</location>
    </subcellularLocation>
</comment>
<comment type="similarity">
    <text evidence="1">Belongs to the peptidase T1B family. HslV subfamily.</text>
</comment>
<protein>
    <recommendedName>
        <fullName evidence="1">ATP-dependent protease subunit HslV</fullName>
        <ecNumber evidence="1">3.4.25.2</ecNumber>
    </recommendedName>
</protein>
<feature type="chain" id="PRO_1000012611" description="ATP-dependent protease subunit HslV">
    <location>
        <begin position="1"/>
        <end position="189"/>
    </location>
</feature>
<feature type="active site" evidence="1">
    <location>
        <position position="12"/>
    </location>
</feature>
<feature type="binding site" evidence="1">
    <location>
        <position position="172"/>
    </location>
    <ligand>
        <name>Na(+)</name>
        <dbReference type="ChEBI" id="CHEBI:29101"/>
    </ligand>
</feature>
<feature type="binding site" evidence="1">
    <location>
        <position position="175"/>
    </location>
    <ligand>
        <name>Na(+)</name>
        <dbReference type="ChEBI" id="CHEBI:29101"/>
    </ligand>
</feature>
<feature type="binding site" evidence="1">
    <location>
        <position position="178"/>
    </location>
    <ligand>
        <name>Na(+)</name>
        <dbReference type="ChEBI" id="CHEBI:29101"/>
    </ligand>
</feature>
<accession>Q5HAB3</accession>
<accession>Q5FDM7</accession>
<gene>
    <name evidence="1" type="primary">hslV</name>
    <name type="ordered locus">Erum7680</name>
    <name type="ordered locus">ERWE_CDS_08110</name>
</gene>
<reference key="1">
    <citation type="journal article" date="2005" name="Proc. Natl. Acad. Sci. U.S.A.">
        <title>The genome of the heartwater agent Ehrlichia ruminantium contains multiple tandem repeats of actively variable copy number.</title>
        <authorList>
            <person name="Collins N.E."/>
            <person name="Liebenberg J."/>
            <person name="de Villiers E.P."/>
            <person name="Brayton K.A."/>
            <person name="Louw E."/>
            <person name="Pretorius A."/>
            <person name="Faber F.E."/>
            <person name="van Heerden H."/>
            <person name="Josemans A."/>
            <person name="van Kleef M."/>
            <person name="Steyn H.C."/>
            <person name="van Strijp M.F."/>
            <person name="Zweygarth E."/>
            <person name="Jongejan F."/>
            <person name="Maillard J.C."/>
            <person name="Berthier D."/>
            <person name="Botha M."/>
            <person name="Joubert F."/>
            <person name="Corton C.H."/>
            <person name="Thomson N.R."/>
            <person name="Allsopp M.T."/>
            <person name="Allsopp B.A."/>
        </authorList>
    </citation>
    <scope>NUCLEOTIDE SEQUENCE [LARGE SCALE GENOMIC DNA]</scope>
    <source>
        <strain>Welgevonden</strain>
    </source>
</reference>
<reference key="2">
    <citation type="journal article" date="2006" name="J. Bacteriol.">
        <title>Comparative genomic analysis of three strains of Ehrlichia ruminantium reveals an active process of genome size plasticity.</title>
        <authorList>
            <person name="Frutos R."/>
            <person name="Viari A."/>
            <person name="Ferraz C."/>
            <person name="Morgat A."/>
            <person name="Eychenie S."/>
            <person name="Kandassamy Y."/>
            <person name="Chantal I."/>
            <person name="Bensaid A."/>
            <person name="Coissac E."/>
            <person name="Vachiery N."/>
            <person name="Demaille J."/>
            <person name="Martinez D."/>
        </authorList>
    </citation>
    <scope>NUCLEOTIDE SEQUENCE [LARGE SCALE GENOMIC DNA]</scope>
    <source>
        <strain>Welgevonden</strain>
    </source>
</reference>
<evidence type="ECO:0000255" key="1">
    <source>
        <dbReference type="HAMAP-Rule" id="MF_00248"/>
    </source>
</evidence>
<sequence>MEHKDNSKMYGTTILCIRRNNHVIIAGDGQVSLGHTVMKNSAKKVKRLANDTVITGFAGATADAFTLFERLEGKLEKHPGQLLRACVELAKDWRMDRYLRRLEAMMIVADKSVSLVISGNGDVLEPENGIAAIGSGGNYALAAAKALCESNDKFSQNMTLEYIVTTAMNIAAEICIYTNNNIIMEKIED</sequence>
<name>HSLV_EHRRW</name>